<dbReference type="EC" id="2.1.1.192" evidence="1"/>
<dbReference type="EMBL" id="AP009179">
    <property type="protein sequence ID" value="BAF73305.1"/>
    <property type="molecule type" value="Genomic_DNA"/>
</dbReference>
<dbReference type="RefSeq" id="WP_012084145.1">
    <property type="nucleotide sequence ID" value="NC_009663.1"/>
</dbReference>
<dbReference type="SMR" id="A6QCU6"/>
<dbReference type="STRING" id="387093.SUN_2369"/>
<dbReference type="KEGG" id="sun:SUN_2369"/>
<dbReference type="eggNOG" id="COG0820">
    <property type="taxonomic scope" value="Bacteria"/>
</dbReference>
<dbReference type="HOGENOM" id="CLU_029101_2_0_7"/>
<dbReference type="Proteomes" id="UP000006378">
    <property type="component" value="Chromosome"/>
</dbReference>
<dbReference type="GO" id="GO:0005737">
    <property type="term" value="C:cytoplasm"/>
    <property type="evidence" value="ECO:0007669"/>
    <property type="project" value="UniProtKB-SubCell"/>
</dbReference>
<dbReference type="GO" id="GO:0051539">
    <property type="term" value="F:4 iron, 4 sulfur cluster binding"/>
    <property type="evidence" value="ECO:0007669"/>
    <property type="project" value="UniProtKB-UniRule"/>
</dbReference>
<dbReference type="GO" id="GO:0046872">
    <property type="term" value="F:metal ion binding"/>
    <property type="evidence" value="ECO:0007669"/>
    <property type="project" value="UniProtKB-KW"/>
</dbReference>
<dbReference type="GO" id="GO:0070040">
    <property type="term" value="F:rRNA (adenine(2503)-C2-)-methyltransferase activity"/>
    <property type="evidence" value="ECO:0007669"/>
    <property type="project" value="UniProtKB-UniRule"/>
</dbReference>
<dbReference type="GO" id="GO:0019843">
    <property type="term" value="F:rRNA binding"/>
    <property type="evidence" value="ECO:0007669"/>
    <property type="project" value="UniProtKB-UniRule"/>
</dbReference>
<dbReference type="GO" id="GO:0002935">
    <property type="term" value="F:tRNA (adenine(37)-C2)-methyltransferase activity"/>
    <property type="evidence" value="ECO:0007669"/>
    <property type="project" value="UniProtKB-UniRule"/>
</dbReference>
<dbReference type="GO" id="GO:0000049">
    <property type="term" value="F:tRNA binding"/>
    <property type="evidence" value="ECO:0007669"/>
    <property type="project" value="UniProtKB-UniRule"/>
</dbReference>
<dbReference type="GO" id="GO:0070475">
    <property type="term" value="P:rRNA base methylation"/>
    <property type="evidence" value="ECO:0007669"/>
    <property type="project" value="UniProtKB-UniRule"/>
</dbReference>
<dbReference type="GO" id="GO:0030488">
    <property type="term" value="P:tRNA methylation"/>
    <property type="evidence" value="ECO:0007669"/>
    <property type="project" value="UniProtKB-UniRule"/>
</dbReference>
<dbReference type="CDD" id="cd01335">
    <property type="entry name" value="Radical_SAM"/>
    <property type="match status" value="1"/>
</dbReference>
<dbReference type="FunFam" id="3.20.20.70:FF:000014">
    <property type="entry name" value="Probable dual-specificity RNA methyltransferase RlmN"/>
    <property type="match status" value="1"/>
</dbReference>
<dbReference type="Gene3D" id="1.10.150.530">
    <property type="match status" value="1"/>
</dbReference>
<dbReference type="Gene3D" id="3.20.20.70">
    <property type="entry name" value="Aldolase class I"/>
    <property type="match status" value="1"/>
</dbReference>
<dbReference type="HAMAP" id="MF_01849">
    <property type="entry name" value="RNA_methyltr_RlmN"/>
    <property type="match status" value="1"/>
</dbReference>
<dbReference type="InterPro" id="IPR013785">
    <property type="entry name" value="Aldolase_TIM"/>
</dbReference>
<dbReference type="InterPro" id="IPR006638">
    <property type="entry name" value="Elp3/MiaA/NifB-like_rSAM"/>
</dbReference>
<dbReference type="InterPro" id="IPR040072">
    <property type="entry name" value="Methyltransferase_A"/>
</dbReference>
<dbReference type="InterPro" id="IPR048641">
    <property type="entry name" value="RlmN_N"/>
</dbReference>
<dbReference type="InterPro" id="IPR027492">
    <property type="entry name" value="RNA_MTrfase_RlmN"/>
</dbReference>
<dbReference type="InterPro" id="IPR004383">
    <property type="entry name" value="rRNA_lsu_MTrfase_RlmN/Cfr"/>
</dbReference>
<dbReference type="InterPro" id="IPR007197">
    <property type="entry name" value="rSAM"/>
</dbReference>
<dbReference type="NCBIfam" id="TIGR00048">
    <property type="entry name" value="rRNA_mod_RlmN"/>
    <property type="match status" value="1"/>
</dbReference>
<dbReference type="PANTHER" id="PTHR30544">
    <property type="entry name" value="23S RRNA METHYLTRANSFERASE"/>
    <property type="match status" value="1"/>
</dbReference>
<dbReference type="PANTHER" id="PTHR30544:SF5">
    <property type="entry name" value="RADICAL SAM CORE DOMAIN-CONTAINING PROTEIN"/>
    <property type="match status" value="1"/>
</dbReference>
<dbReference type="Pfam" id="PF04055">
    <property type="entry name" value="Radical_SAM"/>
    <property type="match status" value="1"/>
</dbReference>
<dbReference type="Pfam" id="PF21016">
    <property type="entry name" value="RlmN_N"/>
    <property type="match status" value="1"/>
</dbReference>
<dbReference type="PIRSF" id="PIRSF006004">
    <property type="entry name" value="CHP00048"/>
    <property type="match status" value="1"/>
</dbReference>
<dbReference type="SFLD" id="SFLDF00275">
    <property type="entry name" value="adenosine_C2_methyltransferase"/>
    <property type="match status" value="1"/>
</dbReference>
<dbReference type="SFLD" id="SFLDG01062">
    <property type="entry name" value="methyltransferase_(Class_A)"/>
    <property type="match status" value="1"/>
</dbReference>
<dbReference type="SMART" id="SM00729">
    <property type="entry name" value="Elp3"/>
    <property type="match status" value="1"/>
</dbReference>
<dbReference type="SUPFAM" id="SSF102114">
    <property type="entry name" value="Radical SAM enzymes"/>
    <property type="match status" value="1"/>
</dbReference>
<dbReference type="PROSITE" id="PS51918">
    <property type="entry name" value="RADICAL_SAM"/>
    <property type="match status" value="1"/>
</dbReference>
<sequence length="359" mass="40659">MPTHKKIIQDLTKEELAEKIKPAFRSKQIYDWIYHKYAASFEEMKNLPKAMREELDAEYTLAPLKTVTVQDSMDGSRKYLFELHDGHTVEAVLLLMRDKEYHEDGSVKHQERYTVCISSQVGCKVGCAFCLTAKGGFMRNLTAGEIVEQLRMIKKDNDIAANRRVNIVFMGMGEPLDNLEAVAKSVKIFAEEEGMAIAPHRQTISTSGLSSKIEKLGKMELGVNLAISLHAVDDELRQQLMPINKAYNIESIITAVKNFPVNDRKRVMFEYLVIKDVNDDISAAKKLLSLLDGIKAKVNLIYFNPYGGTEFKRPSEADMKKFQEYLTKRGLHCTIRESKGLDISAACGQLREQELEGEI</sequence>
<organism>
    <name type="scientific">Sulfurovum sp. (strain NBC37-1)</name>
    <dbReference type="NCBI Taxonomy" id="387093"/>
    <lineage>
        <taxon>Bacteria</taxon>
        <taxon>Pseudomonadati</taxon>
        <taxon>Campylobacterota</taxon>
        <taxon>Epsilonproteobacteria</taxon>
        <taxon>Campylobacterales</taxon>
        <taxon>Sulfurovaceae</taxon>
        <taxon>Sulfurovum</taxon>
    </lineage>
</organism>
<keyword id="KW-0004">4Fe-4S</keyword>
<keyword id="KW-0963">Cytoplasm</keyword>
<keyword id="KW-1015">Disulfide bond</keyword>
<keyword id="KW-0408">Iron</keyword>
<keyword id="KW-0411">Iron-sulfur</keyword>
<keyword id="KW-0479">Metal-binding</keyword>
<keyword id="KW-0489">Methyltransferase</keyword>
<keyword id="KW-0698">rRNA processing</keyword>
<keyword id="KW-0949">S-adenosyl-L-methionine</keyword>
<keyword id="KW-0808">Transferase</keyword>
<keyword id="KW-0819">tRNA processing</keyword>
<reference key="1">
    <citation type="journal article" date="2007" name="Proc. Natl. Acad. Sci. U.S.A.">
        <title>Deep-sea vent epsilon-proteobacterial genomes provide insights into emergence of pathogens.</title>
        <authorList>
            <person name="Nakagawa S."/>
            <person name="Takaki Y."/>
            <person name="Shimamura S."/>
            <person name="Reysenbach A.-L."/>
            <person name="Takai K."/>
            <person name="Horikoshi K."/>
        </authorList>
    </citation>
    <scope>NUCLEOTIDE SEQUENCE [LARGE SCALE GENOMIC DNA]</scope>
    <source>
        <strain>NBC37-1</strain>
    </source>
</reference>
<accession>A6QCU6</accession>
<protein>
    <recommendedName>
        <fullName evidence="1">Dual-specificity RNA methyltransferase RlmN</fullName>
        <ecNumber evidence="1">2.1.1.192</ecNumber>
    </recommendedName>
    <alternativeName>
        <fullName evidence="1">23S rRNA (adenine(2503)-C(2))-methyltransferase</fullName>
    </alternativeName>
    <alternativeName>
        <fullName evidence="1">23S rRNA m2A2503 methyltransferase</fullName>
    </alternativeName>
    <alternativeName>
        <fullName evidence="1">Ribosomal RNA large subunit methyltransferase N</fullName>
    </alternativeName>
    <alternativeName>
        <fullName evidence="1">tRNA (adenine(37)-C(2))-methyltransferase</fullName>
    </alternativeName>
    <alternativeName>
        <fullName evidence="1">tRNA m2A37 methyltransferase</fullName>
    </alternativeName>
</protein>
<gene>
    <name evidence="1" type="primary">rlmN</name>
    <name type="ordered locus">SUN_2369</name>
</gene>
<feature type="chain" id="PRO_0000350477" description="Dual-specificity RNA methyltransferase RlmN">
    <location>
        <begin position="1"/>
        <end position="359"/>
    </location>
</feature>
<feature type="domain" description="Radical SAM core" evidence="2">
    <location>
        <begin position="109"/>
        <end position="342"/>
    </location>
</feature>
<feature type="active site" description="Proton acceptor" evidence="1">
    <location>
        <position position="90"/>
    </location>
</feature>
<feature type="active site" description="S-methylcysteine intermediate" evidence="1">
    <location>
        <position position="347"/>
    </location>
</feature>
<feature type="binding site" evidence="1">
    <location>
        <position position="123"/>
    </location>
    <ligand>
        <name>[4Fe-4S] cluster</name>
        <dbReference type="ChEBI" id="CHEBI:49883"/>
        <note>4Fe-4S-S-AdoMet</note>
    </ligand>
</feature>
<feature type="binding site" evidence="1">
    <location>
        <position position="127"/>
    </location>
    <ligand>
        <name>[4Fe-4S] cluster</name>
        <dbReference type="ChEBI" id="CHEBI:49883"/>
        <note>4Fe-4S-S-AdoMet</note>
    </ligand>
</feature>
<feature type="binding site" evidence="1">
    <location>
        <position position="130"/>
    </location>
    <ligand>
        <name>[4Fe-4S] cluster</name>
        <dbReference type="ChEBI" id="CHEBI:49883"/>
        <note>4Fe-4S-S-AdoMet</note>
    </ligand>
</feature>
<feature type="binding site" evidence="1">
    <location>
        <begin position="173"/>
        <end position="174"/>
    </location>
    <ligand>
        <name>S-adenosyl-L-methionine</name>
        <dbReference type="ChEBI" id="CHEBI:59789"/>
    </ligand>
</feature>
<feature type="binding site" evidence="1">
    <location>
        <position position="205"/>
    </location>
    <ligand>
        <name>S-adenosyl-L-methionine</name>
        <dbReference type="ChEBI" id="CHEBI:59789"/>
    </ligand>
</feature>
<feature type="binding site" evidence="1">
    <location>
        <begin position="228"/>
        <end position="230"/>
    </location>
    <ligand>
        <name>S-adenosyl-L-methionine</name>
        <dbReference type="ChEBI" id="CHEBI:59789"/>
    </ligand>
</feature>
<feature type="binding site" evidence="1">
    <location>
        <position position="304"/>
    </location>
    <ligand>
        <name>S-adenosyl-L-methionine</name>
        <dbReference type="ChEBI" id="CHEBI:59789"/>
    </ligand>
</feature>
<feature type="disulfide bond" description="(transient)" evidence="1">
    <location>
        <begin position="116"/>
        <end position="347"/>
    </location>
</feature>
<name>RLMN_SULNB</name>
<evidence type="ECO:0000255" key="1">
    <source>
        <dbReference type="HAMAP-Rule" id="MF_01849"/>
    </source>
</evidence>
<evidence type="ECO:0000255" key="2">
    <source>
        <dbReference type="PROSITE-ProRule" id="PRU01266"/>
    </source>
</evidence>
<proteinExistence type="inferred from homology"/>
<comment type="function">
    <text evidence="1">Specifically methylates position 2 of adenine 2503 in 23S rRNA and position 2 of adenine 37 in tRNAs. m2A2503 modification seems to play a crucial role in the proofreading step occurring at the peptidyl transferase center and thus would serve to optimize ribosomal fidelity.</text>
</comment>
<comment type="catalytic activity">
    <reaction evidence="1">
        <text>adenosine(2503) in 23S rRNA + 2 reduced [2Fe-2S]-[ferredoxin] + 2 S-adenosyl-L-methionine = 2-methyladenosine(2503) in 23S rRNA + 5'-deoxyadenosine + L-methionine + 2 oxidized [2Fe-2S]-[ferredoxin] + S-adenosyl-L-homocysteine</text>
        <dbReference type="Rhea" id="RHEA:42916"/>
        <dbReference type="Rhea" id="RHEA-COMP:10000"/>
        <dbReference type="Rhea" id="RHEA-COMP:10001"/>
        <dbReference type="Rhea" id="RHEA-COMP:10152"/>
        <dbReference type="Rhea" id="RHEA-COMP:10282"/>
        <dbReference type="ChEBI" id="CHEBI:17319"/>
        <dbReference type="ChEBI" id="CHEBI:33737"/>
        <dbReference type="ChEBI" id="CHEBI:33738"/>
        <dbReference type="ChEBI" id="CHEBI:57844"/>
        <dbReference type="ChEBI" id="CHEBI:57856"/>
        <dbReference type="ChEBI" id="CHEBI:59789"/>
        <dbReference type="ChEBI" id="CHEBI:74411"/>
        <dbReference type="ChEBI" id="CHEBI:74497"/>
        <dbReference type="EC" id="2.1.1.192"/>
    </reaction>
</comment>
<comment type="catalytic activity">
    <reaction evidence="1">
        <text>adenosine(37) in tRNA + 2 reduced [2Fe-2S]-[ferredoxin] + 2 S-adenosyl-L-methionine = 2-methyladenosine(37) in tRNA + 5'-deoxyadenosine + L-methionine + 2 oxidized [2Fe-2S]-[ferredoxin] + S-adenosyl-L-homocysteine</text>
        <dbReference type="Rhea" id="RHEA:43332"/>
        <dbReference type="Rhea" id="RHEA-COMP:10000"/>
        <dbReference type="Rhea" id="RHEA-COMP:10001"/>
        <dbReference type="Rhea" id="RHEA-COMP:10162"/>
        <dbReference type="Rhea" id="RHEA-COMP:10485"/>
        <dbReference type="ChEBI" id="CHEBI:17319"/>
        <dbReference type="ChEBI" id="CHEBI:33737"/>
        <dbReference type="ChEBI" id="CHEBI:33738"/>
        <dbReference type="ChEBI" id="CHEBI:57844"/>
        <dbReference type="ChEBI" id="CHEBI:57856"/>
        <dbReference type="ChEBI" id="CHEBI:59789"/>
        <dbReference type="ChEBI" id="CHEBI:74411"/>
        <dbReference type="ChEBI" id="CHEBI:74497"/>
        <dbReference type="EC" id="2.1.1.192"/>
    </reaction>
</comment>
<comment type="cofactor">
    <cofactor evidence="1">
        <name>[4Fe-4S] cluster</name>
        <dbReference type="ChEBI" id="CHEBI:49883"/>
    </cofactor>
    <text evidence="1">Binds 1 [4Fe-4S] cluster. The cluster is coordinated with 3 cysteines and an exchangeable S-adenosyl-L-methionine.</text>
</comment>
<comment type="subcellular location">
    <subcellularLocation>
        <location evidence="1">Cytoplasm</location>
    </subcellularLocation>
</comment>
<comment type="miscellaneous">
    <text evidence="1">Reaction proceeds by a ping-pong mechanism involving intermediate methylation of a conserved cysteine residue.</text>
</comment>
<comment type="similarity">
    <text evidence="1">Belongs to the radical SAM superfamily. RlmN family.</text>
</comment>